<reference evidence="5 6" key="1">
    <citation type="journal article" date="1995" name="Appl. Environ. Microbiol.">
        <title>Cloning and characterization of a gene encoding a secreted tripeptidyl aminopeptidase from Streptomyces lividans 66.</title>
        <authorList>
            <person name="Butler M.J."/>
            <person name="Binnie C."/>
            <person name="DiZonno M.A."/>
            <person name="Krygsman P."/>
            <person name="Soltes G.A."/>
            <person name="Soostmeyer G."/>
            <person name="Walczyk E."/>
            <person name="Malek L.T."/>
        </authorList>
    </citation>
    <scope>NUCLEOTIDE SEQUENCE [GENOMIC DNA]</scope>
    <scope>PROTEIN SEQUENCE OF 40-50</scope>
    <scope>FUNCTION</scope>
    <scope>SUBCELLULAR LOCATION</scope>
    <source>
        <strain evidence="3">66 / 1326</strain>
    </source>
</reference>
<keyword id="KW-0031">Aminopeptidase</keyword>
<keyword id="KW-0903">Direct protein sequencing</keyword>
<keyword id="KW-0378">Hydrolase</keyword>
<keyword id="KW-0645">Protease</keyword>
<keyword id="KW-0964">Secreted</keyword>
<keyword id="KW-0732">Signal</keyword>
<feature type="signal peptide" evidence="2">
    <location>
        <begin position="1"/>
        <end position="36"/>
    </location>
</feature>
<feature type="propeptide" id="PRO_0000401063" evidence="2 3">
    <location>
        <begin position="37"/>
        <end position="39"/>
    </location>
</feature>
<feature type="chain" id="PRO_5000142441" description="Tripeptidyl aminopeptidase" evidence="3">
    <location>
        <begin position="40"/>
        <end position="537"/>
    </location>
</feature>
<feature type="domain" description="AB hydrolase-1" evidence="2">
    <location>
        <begin position="119"/>
        <end position="497"/>
    </location>
</feature>
<feature type="active site" description="Nucleophile" evidence="1">
    <location>
        <position position="245"/>
    </location>
</feature>
<feature type="active site" evidence="1">
    <location>
        <position position="470"/>
    </location>
</feature>
<feature type="active site" description="Proton donor" evidence="1">
    <location>
        <position position="499"/>
    </location>
</feature>
<name>TAP_STRLI</name>
<protein>
    <recommendedName>
        <fullName evidence="4">Tripeptidyl aminopeptidase</fullName>
        <shortName evidence="4">Tap</shortName>
        <ecNumber>3.4.14.-</ecNumber>
    </recommendedName>
</protein>
<sequence>MRKSSIRRRATAFGTAGALVTATLIAGAVSAPAASAAPADGHGHGRSWDREARGAAIAAARAARAGIDWEDCAADWNLPKPIQCGYVTVPMDYAKPYGKQIRLAVDRIGNTGTRSERQGALIYNPGGPGGSGLRFPARVTNKSAVWANTAKAYDFVGFDPRGVGHSAPISCVDPQEFVKAPKADPVPGSEADKRAQRKLAREYAEGCFERSGEMLPHMTTPNTARDLDVIRAALGEKKLNYLGVSYGTYLGAVYGTLFPDHVRRMVVDSVVNPSRDKIWYQANLDQDVAFEGRWKDWQDWVAANDAAYHLGDTRAEVQDQWLKLRAAAAKKPLGGVVGPAELISFFQSAPYYDSAWAPTAEIFSKYVAGDTQALVDAAAPDLSDTAGNASAENGNAVYTAVECTDAKWPANWRTWDRDNTRLHRDHPFMTWANAWMNLPCATWPVKQQTPLNVKTGKGLPPVLIVQSERDAATPYEGAVELHQRFRGSRLITERDAGSHGVTGLVNPCINDRVDTYLLTGRTDARDVTCAPHATPRP</sequence>
<accession>Q54410</accession>
<organism>
    <name type="scientific">Streptomyces lividans</name>
    <dbReference type="NCBI Taxonomy" id="1916"/>
    <lineage>
        <taxon>Bacteria</taxon>
        <taxon>Bacillati</taxon>
        <taxon>Actinomycetota</taxon>
        <taxon>Actinomycetes</taxon>
        <taxon>Kitasatosporales</taxon>
        <taxon>Streptomycetaceae</taxon>
        <taxon>Streptomyces</taxon>
    </lineage>
</organism>
<comment type="function">
    <text evidence="3">Cleaves tripeptides from the N-termini of proteins. Does not cleave mono- or dipeptides, or N-terminally blocked peptides.</text>
</comment>
<comment type="subcellular location">
    <subcellularLocation>
        <location evidence="3">Secreted</location>
    </subcellularLocation>
</comment>
<comment type="similarity">
    <text evidence="5">Belongs to the peptidase S33 family.</text>
</comment>
<evidence type="ECO:0000250" key="1"/>
<evidence type="ECO:0000255" key="2"/>
<evidence type="ECO:0000269" key="3">
    <source>
    </source>
</evidence>
<evidence type="ECO:0000303" key="4">
    <source>
    </source>
</evidence>
<evidence type="ECO:0000305" key="5"/>
<evidence type="ECO:0000312" key="6">
    <source>
        <dbReference type="EMBL" id="AAA92338.1"/>
    </source>
</evidence>
<dbReference type="EC" id="3.4.14.-"/>
<dbReference type="EMBL" id="L27466">
    <property type="protein sequence ID" value="AAA92338.1"/>
    <property type="molecule type" value="Genomic_DNA"/>
</dbReference>
<dbReference type="SMR" id="Q54410"/>
<dbReference type="ESTHER" id="strco-TAP">
    <property type="family name" value="Tiancimycin-TnmK-Tripeptidase-HIP"/>
</dbReference>
<dbReference type="MEROPS" id="S33.002"/>
<dbReference type="GO" id="GO:0005576">
    <property type="term" value="C:extracellular region"/>
    <property type="evidence" value="ECO:0000314"/>
    <property type="project" value="UniProtKB"/>
</dbReference>
<dbReference type="GO" id="GO:0045148">
    <property type="term" value="F:tripeptide aminopeptidase activity"/>
    <property type="evidence" value="ECO:0000314"/>
    <property type="project" value="UniProtKB"/>
</dbReference>
<dbReference type="GO" id="GO:0006508">
    <property type="term" value="P:proteolysis"/>
    <property type="evidence" value="ECO:0000314"/>
    <property type="project" value="UniProtKB"/>
</dbReference>
<dbReference type="Gene3D" id="3.40.50.1820">
    <property type="entry name" value="alpha/beta hydrolase"/>
    <property type="match status" value="1"/>
</dbReference>
<dbReference type="InterPro" id="IPR029058">
    <property type="entry name" value="AB_hydrolase_fold"/>
</dbReference>
<dbReference type="InterPro" id="IPR013595">
    <property type="entry name" value="Pept_S33_TAP-like_C"/>
</dbReference>
<dbReference type="InterPro" id="IPR051601">
    <property type="entry name" value="Serine_prot/Carboxylest_S33"/>
</dbReference>
<dbReference type="PANTHER" id="PTHR43248">
    <property type="entry name" value="2-SUCCINYL-6-HYDROXY-2,4-CYCLOHEXADIENE-1-CARBOXYLATE SYNTHASE"/>
    <property type="match status" value="1"/>
</dbReference>
<dbReference type="PANTHER" id="PTHR43248:SF29">
    <property type="entry name" value="TRIPEPTIDYL AMINOPEPTIDASE"/>
    <property type="match status" value="1"/>
</dbReference>
<dbReference type="Pfam" id="PF08386">
    <property type="entry name" value="Abhydrolase_4"/>
    <property type="match status" value="1"/>
</dbReference>
<dbReference type="SUPFAM" id="SSF53474">
    <property type="entry name" value="alpha/beta-Hydrolases"/>
    <property type="match status" value="1"/>
</dbReference>
<gene>
    <name evidence="4" type="primary">tap</name>
</gene>
<proteinExistence type="evidence at protein level"/>